<organism>
    <name type="scientific">Aspergillus terreus (strain NIH 2624 / FGSC A1156)</name>
    <dbReference type="NCBI Taxonomy" id="341663"/>
    <lineage>
        <taxon>Eukaryota</taxon>
        <taxon>Fungi</taxon>
        <taxon>Dikarya</taxon>
        <taxon>Ascomycota</taxon>
        <taxon>Pezizomycotina</taxon>
        <taxon>Eurotiomycetes</taxon>
        <taxon>Eurotiomycetidae</taxon>
        <taxon>Eurotiales</taxon>
        <taxon>Aspergillaceae</taxon>
        <taxon>Aspergillus</taxon>
        <taxon>Aspergillus subgen. Circumdati</taxon>
    </lineage>
</organism>
<reference key="1">
    <citation type="submission" date="2005-09" db="EMBL/GenBank/DDBJ databases">
        <title>Annotation of the Aspergillus terreus NIH2624 genome.</title>
        <authorList>
            <person name="Birren B.W."/>
            <person name="Lander E.S."/>
            <person name="Galagan J.E."/>
            <person name="Nusbaum C."/>
            <person name="Devon K."/>
            <person name="Henn M."/>
            <person name="Ma L.-J."/>
            <person name="Jaffe D.B."/>
            <person name="Butler J."/>
            <person name="Alvarez P."/>
            <person name="Gnerre S."/>
            <person name="Grabherr M."/>
            <person name="Kleber M."/>
            <person name="Mauceli E.W."/>
            <person name="Brockman W."/>
            <person name="Rounsley S."/>
            <person name="Young S.K."/>
            <person name="LaButti K."/>
            <person name="Pushparaj V."/>
            <person name="DeCaprio D."/>
            <person name="Crawford M."/>
            <person name="Koehrsen M."/>
            <person name="Engels R."/>
            <person name="Montgomery P."/>
            <person name="Pearson M."/>
            <person name="Howarth C."/>
            <person name="Larson L."/>
            <person name="Luoma S."/>
            <person name="White J."/>
            <person name="Alvarado L."/>
            <person name="Kodira C.D."/>
            <person name="Zeng Q."/>
            <person name="Oleary S."/>
            <person name="Yandava C."/>
            <person name="Denning D.W."/>
            <person name="Nierman W.C."/>
            <person name="Milne T."/>
            <person name="Madden K."/>
        </authorList>
    </citation>
    <scope>NUCLEOTIDE SEQUENCE [LARGE SCALE GENOMIC DNA]</scope>
    <source>
        <strain>NIH 2624 / FGSC A1156</strain>
    </source>
</reference>
<reference key="2">
    <citation type="journal article" date="2013" name="PLoS ONE">
        <title>Heterologous reconstitution of the intact geodin gene cluster in Aspergillus nidulans through a simple and versatile PCR based approach.</title>
        <authorList>
            <person name="Nielsen M.T."/>
            <person name="Nielsen J.B."/>
            <person name="Anyaogu D.C."/>
            <person name="Holm D.K."/>
            <person name="Nielsen K.F."/>
            <person name="Larsen T.O."/>
            <person name="Mortensen U.H."/>
        </authorList>
    </citation>
    <scope>FUNCTION</scope>
</reference>
<dbReference type="EMBL" id="CH476605">
    <property type="protein sequence ID" value="EAU31626.1"/>
    <property type="molecule type" value="Genomic_DNA"/>
</dbReference>
<dbReference type="RefSeq" id="XP_001217075.1">
    <property type="nucleotide sequence ID" value="XM_001217075.1"/>
</dbReference>
<dbReference type="SMR" id="Q0CCY1"/>
<dbReference type="STRING" id="341663.Q0CCY1"/>
<dbReference type="EnsemblFungi" id="EAU31626">
    <property type="protein sequence ID" value="EAU31626"/>
    <property type="gene ID" value="ATEG_08453"/>
</dbReference>
<dbReference type="GeneID" id="4353103"/>
<dbReference type="VEuPathDB" id="FungiDB:ATEG_08453"/>
<dbReference type="HOGENOM" id="CLU_1209591_0_0_1"/>
<dbReference type="OrthoDB" id="2943660at2759"/>
<dbReference type="Proteomes" id="UP000007963">
    <property type="component" value="Unassembled WGS sequence"/>
</dbReference>
<dbReference type="GO" id="GO:0005634">
    <property type="term" value="C:nucleus"/>
    <property type="evidence" value="ECO:0007669"/>
    <property type="project" value="UniProtKB-SubCell"/>
</dbReference>
<dbReference type="GO" id="GO:0003677">
    <property type="term" value="F:DNA binding"/>
    <property type="evidence" value="ECO:0007669"/>
    <property type="project" value="UniProtKB-KW"/>
</dbReference>
<dbReference type="GO" id="GO:0000981">
    <property type="term" value="F:DNA-binding transcription factor activity, RNA polymerase II-specific"/>
    <property type="evidence" value="ECO:0007669"/>
    <property type="project" value="InterPro"/>
</dbReference>
<dbReference type="GO" id="GO:0008270">
    <property type="term" value="F:zinc ion binding"/>
    <property type="evidence" value="ECO:0007669"/>
    <property type="project" value="InterPro"/>
</dbReference>
<dbReference type="GO" id="GO:0009893">
    <property type="term" value="P:positive regulation of metabolic process"/>
    <property type="evidence" value="ECO:0007669"/>
    <property type="project" value="UniProtKB-ARBA"/>
</dbReference>
<dbReference type="CDD" id="cd00067">
    <property type="entry name" value="GAL4"/>
    <property type="match status" value="1"/>
</dbReference>
<dbReference type="Gene3D" id="4.10.240.10">
    <property type="entry name" value="Zn(2)-C6 fungal-type DNA-binding domain"/>
    <property type="match status" value="1"/>
</dbReference>
<dbReference type="InterPro" id="IPR050675">
    <property type="entry name" value="OAF3"/>
</dbReference>
<dbReference type="InterPro" id="IPR036864">
    <property type="entry name" value="Zn2-C6_fun-type_DNA-bd_sf"/>
</dbReference>
<dbReference type="InterPro" id="IPR001138">
    <property type="entry name" value="Zn2Cys6_DnaBD"/>
</dbReference>
<dbReference type="PANTHER" id="PTHR31069:SF31">
    <property type="entry name" value="MONODICTYPHENONE CLUSTER TRANSCRIPTION FACTOR-RELATED"/>
    <property type="match status" value="1"/>
</dbReference>
<dbReference type="PANTHER" id="PTHR31069">
    <property type="entry name" value="OLEATE-ACTIVATED TRANSCRIPTION FACTOR 1-RELATED"/>
    <property type="match status" value="1"/>
</dbReference>
<dbReference type="Pfam" id="PF00172">
    <property type="entry name" value="Zn_clus"/>
    <property type="match status" value="1"/>
</dbReference>
<dbReference type="PRINTS" id="PR00755">
    <property type="entry name" value="AFLATOXINBRP"/>
</dbReference>
<dbReference type="SMART" id="SM00066">
    <property type="entry name" value="GAL4"/>
    <property type="match status" value="1"/>
</dbReference>
<dbReference type="SUPFAM" id="SSF57701">
    <property type="entry name" value="Zn2/Cys6 DNA-binding domain"/>
    <property type="match status" value="1"/>
</dbReference>
<dbReference type="PROSITE" id="PS00463">
    <property type="entry name" value="ZN2_CY6_FUNGAL_1"/>
    <property type="match status" value="1"/>
</dbReference>
<dbReference type="PROSITE" id="PS50048">
    <property type="entry name" value="ZN2_CY6_FUNGAL_2"/>
    <property type="match status" value="1"/>
</dbReference>
<comment type="function">
    <text evidence="3">Transcription factor that regulates the expression of the gene cluster that mediates the biosynthesis of geodin, an intermediate in the biosynthesis of other natural products (PubMed:24009710).</text>
</comment>
<comment type="subcellular location">
    <subcellularLocation>
        <location evidence="1">Nucleus</location>
    </subcellularLocation>
</comment>
<sequence>MSAEGHKLRGSCHACAASKVRCSKEKPTCSRCSKRGTTCEYLITKRPGRKQLNNRSTAKESSNTTRTSLATVPQGLLEPDPMSTAIPLADQPPWSPPGTTPSSLDVFSSLFDSAEGSWSLPLADWDNEVDEYLTHLAMPRTANSEPLDAEGGITSSHNTSSNSPARPPTLQPVCPQLTCVAQSTFPAPGQCRGTSPTLVLYLSQQCAGSVEAADHQRSAGRLHIRRPAR</sequence>
<keyword id="KW-0238">DNA-binding</keyword>
<keyword id="KW-0479">Metal-binding</keyword>
<keyword id="KW-0539">Nucleus</keyword>
<keyword id="KW-1185">Reference proteome</keyword>
<keyword id="KW-0804">Transcription</keyword>
<keyword id="KW-0805">Transcription regulation</keyword>
<keyword id="KW-0862">Zinc</keyword>
<proteinExistence type="inferred from homology"/>
<evidence type="ECO:0000255" key="1">
    <source>
        <dbReference type="PROSITE-ProRule" id="PRU00227"/>
    </source>
</evidence>
<evidence type="ECO:0000256" key="2">
    <source>
        <dbReference type="SAM" id="MobiDB-lite"/>
    </source>
</evidence>
<evidence type="ECO:0000269" key="3">
    <source>
    </source>
</evidence>
<evidence type="ECO:0000303" key="4">
    <source>
    </source>
</evidence>
<protein>
    <recommendedName>
        <fullName evidence="4">Geodin cluster transcription factor</fullName>
    </recommendedName>
    <alternativeName>
        <fullName evidence="4">Geodin synthesis protein R</fullName>
    </alternativeName>
</protein>
<accession>Q0CCY1</accession>
<name>GEDR_ASPTN</name>
<gene>
    <name evidence="4" type="primary">gedR</name>
    <name type="ORF">ATEG_08453</name>
</gene>
<feature type="chain" id="PRO_0000437057" description="Geodin cluster transcription factor">
    <location>
        <begin position="1"/>
        <end position="229"/>
    </location>
</feature>
<feature type="DNA-binding region" description="Zn(2)-C6 fungal-type" evidence="1">
    <location>
        <begin position="12"/>
        <end position="39"/>
    </location>
</feature>
<feature type="region of interest" description="Disordered" evidence="2">
    <location>
        <begin position="50"/>
        <end position="100"/>
    </location>
</feature>
<feature type="region of interest" description="Disordered" evidence="2">
    <location>
        <begin position="141"/>
        <end position="169"/>
    </location>
</feature>
<feature type="compositionally biased region" description="Polar residues" evidence="2">
    <location>
        <begin position="51"/>
        <end position="71"/>
    </location>
</feature>
<feature type="compositionally biased region" description="Polar residues" evidence="2">
    <location>
        <begin position="153"/>
        <end position="164"/>
    </location>
</feature>